<evidence type="ECO:0000255" key="1">
    <source>
        <dbReference type="HAMAP-Rule" id="MF_00332"/>
    </source>
</evidence>
<evidence type="ECO:0000256" key="2">
    <source>
        <dbReference type="SAM" id="MobiDB-lite"/>
    </source>
</evidence>
<proteinExistence type="inferred from homology"/>
<reference key="1">
    <citation type="journal article" date="2007" name="Genome Res.">
        <title>Reductive evolution and niche adaptation inferred from the genome of Mycobacterium ulcerans, the causative agent of Buruli ulcer.</title>
        <authorList>
            <person name="Stinear T.P."/>
            <person name="Seemann T."/>
            <person name="Pidot S."/>
            <person name="Frigui W."/>
            <person name="Reysset G."/>
            <person name="Garnier T."/>
            <person name="Meurice G."/>
            <person name="Simon D."/>
            <person name="Bouchier C."/>
            <person name="Ma L."/>
            <person name="Tichit M."/>
            <person name="Porter J.L."/>
            <person name="Ryan J."/>
            <person name="Johnson P.D.R."/>
            <person name="Davies J.K."/>
            <person name="Jenkin G.A."/>
            <person name="Small P.L.C."/>
            <person name="Jones L.M."/>
            <person name="Tekaia F."/>
            <person name="Laval F."/>
            <person name="Daffe M."/>
            <person name="Parkhill J."/>
            <person name="Cole S.T."/>
        </authorList>
    </citation>
    <scope>NUCLEOTIDE SEQUENCE [LARGE SCALE GENOMIC DNA]</scope>
    <source>
        <strain>Agy99</strain>
    </source>
</reference>
<organism>
    <name type="scientific">Mycobacterium ulcerans (strain Agy99)</name>
    <dbReference type="NCBI Taxonomy" id="362242"/>
    <lineage>
        <taxon>Bacteria</taxon>
        <taxon>Bacillati</taxon>
        <taxon>Actinomycetota</taxon>
        <taxon>Actinomycetes</taxon>
        <taxon>Mycobacteriales</taxon>
        <taxon>Mycobacteriaceae</taxon>
        <taxon>Mycobacterium</taxon>
        <taxon>Mycobacterium ulcerans group</taxon>
    </lineage>
</organism>
<protein>
    <recommendedName>
        <fullName evidence="1">Chaperone protein DnaK</fullName>
    </recommendedName>
    <alternativeName>
        <fullName evidence="1">HSP70</fullName>
    </alternativeName>
    <alternativeName>
        <fullName evidence="1">Heat shock 70 kDa protein</fullName>
    </alternativeName>
    <alternativeName>
        <fullName evidence="1">Heat shock protein 70</fullName>
    </alternativeName>
</protein>
<gene>
    <name evidence="1" type="primary">dnaK</name>
    <name type="ordered locus">MUL_0593</name>
</gene>
<comment type="function">
    <text evidence="1">Acts as a chaperone.</text>
</comment>
<comment type="induction">
    <text evidence="1">By stress conditions e.g. heat shock.</text>
</comment>
<comment type="similarity">
    <text evidence="1">Belongs to the heat shock protein 70 family.</text>
</comment>
<feature type="chain" id="PRO_1000059612" description="Chaperone protein DnaK">
    <location>
        <begin position="1"/>
        <end position="622"/>
    </location>
</feature>
<feature type="region of interest" description="Disordered" evidence="2">
    <location>
        <begin position="589"/>
        <end position="608"/>
    </location>
</feature>
<feature type="compositionally biased region" description="Gly residues" evidence="2">
    <location>
        <begin position="594"/>
        <end position="603"/>
    </location>
</feature>
<feature type="modified residue" description="Phosphothreonine; by autocatalysis" evidence="1">
    <location>
        <position position="175"/>
    </location>
</feature>
<name>DNAK_MYCUA</name>
<keyword id="KW-0067">ATP-binding</keyword>
<keyword id="KW-0143">Chaperone</keyword>
<keyword id="KW-0547">Nucleotide-binding</keyword>
<keyword id="KW-0597">Phosphoprotein</keyword>
<keyword id="KW-0346">Stress response</keyword>
<sequence length="622" mass="66402">MARAVGIDLGTTNSVVAVLEGGDPVVVANSEGSRTTPSVVAFARNGEVLVGQPAKNQAVTNVERTMRSVKRHMGGDWSIEIDDKKYTTPEISARVLMKLKRDAEAYLGEDIADAVITVPAYFNDAQRQATKDAGQIAGLNVLRIVNEPTAAALAYGLDKGEKDQTILVFDLGGGTFDVSLLEIGEGVVEVRATSGDNHLGGDDWDDRVVEWLVDKFKGTSGIDLTKDKMAMQRLREAAEKAKIELSSSQSTSINLPYITVDADKNPLFLDEQLTRAEFQRITQDLLDRTRKPFQSVIADTGISVSDIDHVVLVGGSTRMPAVTELVKELTGGKEPNKGVNPDEVVAVGAALQAGVLKGEVKDVLLLDVTPLSLGIETKGGVMTKLIERNTTIPTKRSETFTTADDNQPSVQIQVYQGEREIAAHNKLLGSFELTGIPPAPRGVSQIEVTFDIDANGIVHVTAKDKGTGKENTIRIQEGSGLSKDEIDRMIKDAEAHAAEDHKRREEADVRNQAETLVYQTEKFVKEQREAEGGSKVPEDTLNKVDAAVAEAKSALAGTDIAAIKSAMEKLGQESQALGQAIYEATQADAAAAGAPGGQPGGAEPGADDVVDAEVVDDDQESK</sequence>
<accession>A0PLQ1</accession>
<dbReference type="EMBL" id="CP000325">
    <property type="protein sequence ID" value="ABL03270.1"/>
    <property type="molecule type" value="Genomic_DNA"/>
</dbReference>
<dbReference type="RefSeq" id="WP_011738895.1">
    <property type="nucleotide sequence ID" value="NC_008611.1"/>
</dbReference>
<dbReference type="SMR" id="A0PLQ1"/>
<dbReference type="KEGG" id="mul:MUL_0593"/>
<dbReference type="eggNOG" id="COG0443">
    <property type="taxonomic scope" value="Bacteria"/>
</dbReference>
<dbReference type="HOGENOM" id="CLU_005965_2_1_11"/>
<dbReference type="Proteomes" id="UP000000765">
    <property type="component" value="Chromosome"/>
</dbReference>
<dbReference type="GO" id="GO:0005524">
    <property type="term" value="F:ATP binding"/>
    <property type="evidence" value="ECO:0007669"/>
    <property type="project" value="UniProtKB-UniRule"/>
</dbReference>
<dbReference type="GO" id="GO:0140662">
    <property type="term" value="F:ATP-dependent protein folding chaperone"/>
    <property type="evidence" value="ECO:0007669"/>
    <property type="project" value="InterPro"/>
</dbReference>
<dbReference type="GO" id="GO:0051082">
    <property type="term" value="F:unfolded protein binding"/>
    <property type="evidence" value="ECO:0007669"/>
    <property type="project" value="InterPro"/>
</dbReference>
<dbReference type="CDD" id="cd10234">
    <property type="entry name" value="ASKHA_NBD_HSP70_DnaK-like"/>
    <property type="match status" value="1"/>
</dbReference>
<dbReference type="FunFam" id="2.60.34.10:FF:000014">
    <property type="entry name" value="Chaperone protein DnaK HSP70"/>
    <property type="match status" value="1"/>
</dbReference>
<dbReference type="FunFam" id="1.20.1270.10:FF:000001">
    <property type="entry name" value="Molecular chaperone DnaK"/>
    <property type="match status" value="1"/>
</dbReference>
<dbReference type="FunFam" id="3.30.420.40:FF:000071">
    <property type="entry name" value="Molecular chaperone DnaK"/>
    <property type="match status" value="1"/>
</dbReference>
<dbReference type="FunFam" id="3.90.640.10:FF:000003">
    <property type="entry name" value="Molecular chaperone DnaK"/>
    <property type="match status" value="1"/>
</dbReference>
<dbReference type="Gene3D" id="1.20.1270.10">
    <property type="match status" value="1"/>
</dbReference>
<dbReference type="Gene3D" id="3.30.420.40">
    <property type="match status" value="2"/>
</dbReference>
<dbReference type="Gene3D" id="3.90.640.10">
    <property type="entry name" value="Actin, Chain A, domain 4"/>
    <property type="match status" value="1"/>
</dbReference>
<dbReference type="Gene3D" id="2.60.34.10">
    <property type="entry name" value="Substrate Binding Domain Of DNAk, Chain A, domain 1"/>
    <property type="match status" value="1"/>
</dbReference>
<dbReference type="HAMAP" id="MF_00332">
    <property type="entry name" value="DnaK"/>
    <property type="match status" value="1"/>
</dbReference>
<dbReference type="InterPro" id="IPR043129">
    <property type="entry name" value="ATPase_NBD"/>
</dbReference>
<dbReference type="InterPro" id="IPR012725">
    <property type="entry name" value="Chaperone_DnaK"/>
</dbReference>
<dbReference type="InterPro" id="IPR018181">
    <property type="entry name" value="Heat_shock_70_CS"/>
</dbReference>
<dbReference type="InterPro" id="IPR029048">
    <property type="entry name" value="HSP70_C_sf"/>
</dbReference>
<dbReference type="InterPro" id="IPR029047">
    <property type="entry name" value="HSP70_peptide-bd_sf"/>
</dbReference>
<dbReference type="InterPro" id="IPR013126">
    <property type="entry name" value="Hsp_70_fam"/>
</dbReference>
<dbReference type="NCBIfam" id="NF001413">
    <property type="entry name" value="PRK00290.1"/>
    <property type="match status" value="1"/>
</dbReference>
<dbReference type="NCBIfam" id="TIGR02350">
    <property type="entry name" value="prok_dnaK"/>
    <property type="match status" value="1"/>
</dbReference>
<dbReference type="PANTHER" id="PTHR19375">
    <property type="entry name" value="HEAT SHOCK PROTEIN 70KDA"/>
    <property type="match status" value="1"/>
</dbReference>
<dbReference type="Pfam" id="PF00012">
    <property type="entry name" value="HSP70"/>
    <property type="match status" value="2"/>
</dbReference>
<dbReference type="PRINTS" id="PR00301">
    <property type="entry name" value="HEATSHOCK70"/>
</dbReference>
<dbReference type="SUPFAM" id="SSF53067">
    <property type="entry name" value="Actin-like ATPase domain"/>
    <property type="match status" value="2"/>
</dbReference>
<dbReference type="SUPFAM" id="SSF100934">
    <property type="entry name" value="Heat shock protein 70kD (HSP70), C-terminal subdomain"/>
    <property type="match status" value="1"/>
</dbReference>
<dbReference type="SUPFAM" id="SSF100920">
    <property type="entry name" value="Heat shock protein 70kD (HSP70), peptide-binding domain"/>
    <property type="match status" value="1"/>
</dbReference>
<dbReference type="PROSITE" id="PS00297">
    <property type="entry name" value="HSP70_1"/>
    <property type="match status" value="1"/>
</dbReference>
<dbReference type="PROSITE" id="PS00329">
    <property type="entry name" value="HSP70_2"/>
    <property type="match status" value="1"/>
</dbReference>
<dbReference type="PROSITE" id="PS01036">
    <property type="entry name" value="HSP70_3"/>
    <property type="match status" value="1"/>
</dbReference>